<gene>
    <name type="ordered locus">MJ0417</name>
</gene>
<accession>Q57860</accession>
<keyword id="KW-1185">Reference proteome</keyword>
<name>Y417_METJA</name>
<reference key="1">
    <citation type="journal article" date="1996" name="Science">
        <title>Complete genome sequence of the methanogenic archaeon, Methanococcus jannaschii.</title>
        <authorList>
            <person name="Bult C.J."/>
            <person name="White O."/>
            <person name="Olsen G.J."/>
            <person name="Zhou L."/>
            <person name="Fleischmann R.D."/>
            <person name="Sutton G.G."/>
            <person name="Blake J.A."/>
            <person name="FitzGerald L.M."/>
            <person name="Clayton R.A."/>
            <person name="Gocayne J.D."/>
            <person name="Kerlavage A.R."/>
            <person name="Dougherty B.A."/>
            <person name="Tomb J.-F."/>
            <person name="Adams M.D."/>
            <person name="Reich C.I."/>
            <person name="Overbeek R."/>
            <person name="Kirkness E.F."/>
            <person name="Weinstock K.G."/>
            <person name="Merrick J.M."/>
            <person name="Glodek A."/>
            <person name="Scott J.L."/>
            <person name="Geoghagen N.S.M."/>
            <person name="Weidman J.F."/>
            <person name="Fuhrmann J.L."/>
            <person name="Nguyen D."/>
            <person name="Utterback T.R."/>
            <person name="Kelley J.M."/>
            <person name="Peterson J.D."/>
            <person name="Sadow P.W."/>
            <person name="Hanna M.C."/>
            <person name="Cotton M.D."/>
            <person name="Roberts K.M."/>
            <person name="Hurst M.A."/>
            <person name="Kaine B.P."/>
            <person name="Borodovsky M."/>
            <person name="Klenk H.-P."/>
            <person name="Fraser C.M."/>
            <person name="Smith H.O."/>
            <person name="Woese C.R."/>
            <person name="Venter J.C."/>
        </authorList>
    </citation>
    <scope>NUCLEOTIDE SEQUENCE [LARGE SCALE GENOMIC DNA]</scope>
    <source>
        <strain>ATCC 43067 / DSM 2661 / JAL-1 / JCM 10045 / NBRC 100440</strain>
    </source>
</reference>
<feature type="chain" id="PRO_0000106863" description="Uncharacterized protein MJ0417">
    <location>
        <begin position="1"/>
        <end position="237"/>
    </location>
</feature>
<sequence length="237" mass="27454">MKVDLHVHSIVSKCSLNPKGLLEKFCIKKNIVPAICDHNKLTKLNFAIPGEEIATNSGEFIGLFLTEEIPANLDLYEALDRVREQGALIYLPHPFDLNRRRSLAKFNVLEEREFLKYVHVVEVFNSRCRSIEPNLKALEYAEKYDFAMAFGSDAHFIWEVGNAYIKFSELNIEKPDDLSPKEFLNLLKIKTDELLKAKSNLLKNPWKTRWHYGKLGSKYNIALYSKVVKNVRRKLNI</sequence>
<proteinExistence type="predicted"/>
<protein>
    <recommendedName>
        <fullName>Uncharacterized protein MJ0417</fullName>
    </recommendedName>
</protein>
<organism>
    <name type="scientific">Methanocaldococcus jannaschii (strain ATCC 43067 / DSM 2661 / JAL-1 / JCM 10045 / NBRC 100440)</name>
    <name type="common">Methanococcus jannaschii</name>
    <dbReference type="NCBI Taxonomy" id="243232"/>
    <lineage>
        <taxon>Archaea</taxon>
        <taxon>Methanobacteriati</taxon>
        <taxon>Methanobacteriota</taxon>
        <taxon>Methanomada group</taxon>
        <taxon>Methanococci</taxon>
        <taxon>Methanococcales</taxon>
        <taxon>Methanocaldococcaceae</taxon>
        <taxon>Methanocaldococcus</taxon>
    </lineage>
</organism>
<dbReference type="EMBL" id="L77117">
    <property type="protein sequence ID" value="AAB98404.1"/>
    <property type="molecule type" value="Genomic_DNA"/>
</dbReference>
<dbReference type="PIR" id="A64352">
    <property type="entry name" value="A64352"/>
</dbReference>
<dbReference type="RefSeq" id="WP_010869916.1">
    <property type="nucleotide sequence ID" value="NC_000909.1"/>
</dbReference>
<dbReference type="SMR" id="Q57860"/>
<dbReference type="STRING" id="243232.MJ_0417"/>
<dbReference type="PaxDb" id="243232-MJ_0417"/>
<dbReference type="EnsemblBacteria" id="AAB98404">
    <property type="protein sequence ID" value="AAB98404"/>
    <property type="gene ID" value="MJ_0417"/>
</dbReference>
<dbReference type="GeneID" id="1451277"/>
<dbReference type="KEGG" id="mja:MJ_0417"/>
<dbReference type="eggNOG" id="arCOG00302">
    <property type="taxonomic scope" value="Archaea"/>
</dbReference>
<dbReference type="HOGENOM" id="CLU_072983_0_0_2"/>
<dbReference type="InParanoid" id="Q57860"/>
<dbReference type="OrthoDB" id="63337at2157"/>
<dbReference type="PhylomeDB" id="Q57860"/>
<dbReference type="Proteomes" id="UP000000805">
    <property type="component" value="Chromosome"/>
</dbReference>
<dbReference type="GO" id="GO:0035312">
    <property type="term" value="F:5'-3' DNA exonuclease activity"/>
    <property type="evidence" value="ECO:0000318"/>
    <property type="project" value="GO_Central"/>
</dbReference>
<dbReference type="GO" id="GO:0004534">
    <property type="term" value="F:5'-3' RNA exonuclease activity"/>
    <property type="evidence" value="ECO:0000318"/>
    <property type="project" value="GO_Central"/>
</dbReference>
<dbReference type="CDD" id="cd07432">
    <property type="entry name" value="PHP_HisPPase"/>
    <property type="match status" value="1"/>
</dbReference>
<dbReference type="FunFam" id="3.20.20.140:FF:000101">
    <property type="entry name" value="PHP domain-containing protein"/>
    <property type="match status" value="1"/>
</dbReference>
<dbReference type="Gene3D" id="3.20.20.140">
    <property type="entry name" value="Metal-dependent hydrolases"/>
    <property type="match status" value="1"/>
</dbReference>
<dbReference type="InterPro" id="IPR052018">
    <property type="entry name" value="PHP_domain"/>
</dbReference>
<dbReference type="InterPro" id="IPR003141">
    <property type="entry name" value="Pol/His_phosphatase_N"/>
</dbReference>
<dbReference type="InterPro" id="IPR016195">
    <property type="entry name" value="Pol/histidinol_Pase-like"/>
</dbReference>
<dbReference type="PANTHER" id="PTHR42924">
    <property type="entry name" value="EXONUCLEASE"/>
    <property type="match status" value="1"/>
</dbReference>
<dbReference type="PANTHER" id="PTHR42924:SF3">
    <property type="entry name" value="POLYMERASE_HISTIDINOL PHOSPHATASE N-TERMINAL DOMAIN-CONTAINING PROTEIN"/>
    <property type="match status" value="1"/>
</dbReference>
<dbReference type="Pfam" id="PF13263">
    <property type="entry name" value="PHP_C"/>
    <property type="match status" value="1"/>
</dbReference>
<dbReference type="SMART" id="SM00481">
    <property type="entry name" value="POLIIIAc"/>
    <property type="match status" value="1"/>
</dbReference>
<dbReference type="SUPFAM" id="SSF89550">
    <property type="entry name" value="PHP domain-like"/>
    <property type="match status" value="1"/>
</dbReference>